<gene>
    <name type="ordered locus">CAALFM_C102740CA</name>
    <name type="ORF">CaO19.10480</name>
    <name type="ORF">CaO19.2963</name>
</gene>
<feature type="chain" id="PRO_0000417342" description="NAD-dependent protein deacylase">
    <location>
        <begin position="1"/>
        <end position="306"/>
    </location>
</feature>
<feature type="domain" description="Deacetylase sirtuin-type" evidence="2">
    <location>
        <begin position="1"/>
        <end position="305"/>
    </location>
</feature>
<feature type="active site" description="Proton acceptor" evidence="2">
    <location>
        <position position="123"/>
    </location>
</feature>
<feature type="binding site" evidence="1">
    <location>
        <begin position="23"/>
        <end position="42"/>
    </location>
    <ligand>
        <name>NAD(+)</name>
        <dbReference type="ChEBI" id="CHEBI:57540"/>
    </ligand>
</feature>
<feature type="binding site" evidence="1">
    <location>
        <position position="67"/>
    </location>
    <ligand>
        <name>substrate</name>
    </ligand>
</feature>
<feature type="binding site" evidence="1">
    <location>
        <position position="70"/>
    </location>
    <ligand>
        <name>substrate</name>
    </ligand>
</feature>
<feature type="binding site" evidence="1">
    <location>
        <begin position="103"/>
        <end position="106"/>
    </location>
    <ligand>
        <name>NAD(+)</name>
        <dbReference type="ChEBI" id="CHEBI:57540"/>
    </ligand>
</feature>
<feature type="binding site" evidence="1">
    <location>
        <position position="131"/>
    </location>
    <ligand>
        <name>Zn(2+)</name>
        <dbReference type="ChEBI" id="CHEBI:29105"/>
    </ligand>
</feature>
<feature type="binding site" evidence="1">
    <location>
        <position position="136"/>
    </location>
    <ligand>
        <name>Zn(2+)</name>
        <dbReference type="ChEBI" id="CHEBI:29105"/>
    </ligand>
</feature>
<feature type="binding site" evidence="1">
    <location>
        <position position="200"/>
    </location>
    <ligand>
        <name>Zn(2+)</name>
        <dbReference type="ChEBI" id="CHEBI:29105"/>
    </ligand>
</feature>
<feature type="binding site" evidence="1">
    <location>
        <position position="203"/>
    </location>
    <ligand>
        <name>Zn(2+)</name>
        <dbReference type="ChEBI" id="CHEBI:29105"/>
    </ligand>
</feature>
<feature type="binding site" evidence="1">
    <location>
        <begin position="243"/>
        <end position="245"/>
    </location>
    <ligand>
        <name>NAD(+)</name>
        <dbReference type="ChEBI" id="CHEBI:57540"/>
    </ligand>
</feature>
<feature type="binding site" evidence="1">
    <location>
        <begin position="269"/>
        <end position="271"/>
    </location>
    <ligand>
        <name>NAD(+)</name>
        <dbReference type="ChEBI" id="CHEBI:57540"/>
    </ligand>
</feature>
<feature type="binding site" evidence="1">
    <location>
        <position position="291"/>
    </location>
    <ligand>
        <name>NAD(+)</name>
        <dbReference type="ChEBI" id="CHEBI:57540"/>
    </ligand>
</feature>
<sequence>MNKQLKEFQEYLPKCRKIIALVGAGLSASSGLPTFRGSQGLWKNFNMIDLATPDAFYIDPGLVWQFYSWRRYGALRAKPNKGHYALSKLSHKFNSDEYITITQNVDGLSSRSGHNLDSLYEIHGSLFDLKCTSFMCNYVDHNNFKQPLTKALEDTEFEYSNLSTRKRTFGDSDGNDGVDISLSPQFNPVKTISEKDLPSCPVCHDLLRPGVVWFGESLPLNLITEIDSFVESDPSVDLILVIGTSGTVYPANSYVERVRLKGGKVAIFNTDIEDNILNGKVEDTWGFKGDAAELLPIALKPLIGDI</sequence>
<protein>
    <recommendedName>
        <fullName evidence="1">NAD-dependent protein deacylase</fullName>
        <ecNumber evidence="1">2.3.1.-</ecNumber>
    </recommendedName>
    <alternativeName>
        <fullName evidence="1">Regulatory protein SIR2 homolog 5</fullName>
    </alternativeName>
</protein>
<name>SIR5_CANAL</name>
<dbReference type="EC" id="2.3.1.-" evidence="1"/>
<dbReference type="EMBL" id="CP017623">
    <property type="protein sequence ID" value="AOW25955.1"/>
    <property type="molecule type" value="Genomic_DNA"/>
</dbReference>
<dbReference type="RefSeq" id="XP_721462.1">
    <property type="nucleotide sequence ID" value="XM_716369.2"/>
</dbReference>
<dbReference type="SMR" id="Q5AI90"/>
<dbReference type="STRING" id="237561.Q5AI90"/>
<dbReference type="EnsemblFungi" id="C1_02740C_A-T">
    <property type="protein sequence ID" value="C1_02740C_A-T-p1"/>
    <property type="gene ID" value="C1_02740C_A"/>
</dbReference>
<dbReference type="GeneID" id="3636827"/>
<dbReference type="KEGG" id="cal:CAALFM_C102740CA"/>
<dbReference type="CGD" id="CAL0000195751">
    <property type="gene designation" value="orf19.10480"/>
</dbReference>
<dbReference type="VEuPathDB" id="FungiDB:C1_02740C_A"/>
<dbReference type="eggNOG" id="KOG2684">
    <property type="taxonomic scope" value="Eukaryota"/>
</dbReference>
<dbReference type="HOGENOM" id="CLU_023643_3_1_1"/>
<dbReference type="InParanoid" id="Q5AI90"/>
<dbReference type="OMA" id="KWIAAGP"/>
<dbReference type="OrthoDB" id="424302at2759"/>
<dbReference type="PRO" id="PR:Q5AI90"/>
<dbReference type="Proteomes" id="UP000000559">
    <property type="component" value="Chromosome 1"/>
</dbReference>
<dbReference type="GO" id="GO:0005829">
    <property type="term" value="C:cytosol"/>
    <property type="evidence" value="ECO:0000318"/>
    <property type="project" value="GO_Central"/>
</dbReference>
<dbReference type="GO" id="GO:0005739">
    <property type="term" value="C:mitochondrion"/>
    <property type="evidence" value="ECO:0000318"/>
    <property type="project" value="GO_Central"/>
</dbReference>
<dbReference type="GO" id="GO:0005634">
    <property type="term" value="C:nucleus"/>
    <property type="evidence" value="ECO:0000318"/>
    <property type="project" value="GO_Central"/>
</dbReference>
<dbReference type="GO" id="GO:0017136">
    <property type="term" value="F:histone deacetylase activity, NAD-dependent"/>
    <property type="evidence" value="ECO:0000318"/>
    <property type="project" value="GO_Central"/>
</dbReference>
<dbReference type="GO" id="GO:0070403">
    <property type="term" value="F:NAD+ binding"/>
    <property type="evidence" value="ECO:0000318"/>
    <property type="project" value="GO_Central"/>
</dbReference>
<dbReference type="GO" id="GO:0061697">
    <property type="term" value="F:protein-glutaryllysine deglutarylase activity"/>
    <property type="evidence" value="ECO:0007669"/>
    <property type="project" value="RHEA"/>
</dbReference>
<dbReference type="GO" id="GO:0036054">
    <property type="term" value="F:protein-malonyllysine demalonylase activity"/>
    <property type="evidence" value="ECO:0007669"/>
    <property type="project" value="UniProtKB-UniRule"/>
</dbReference>
<dbReference type="GO" id="GO:0036055">
    <property type="term" value="F:protein-succinyllysine desuccinylase activity"/>
    <property type="evidence" value="ECO:0007669"/>
    <property type="project" value="UniProtKB-UniRule"/>
</dbReference>
<dbReference type="GO" id="GO:0008270">
    <property type="term" value="F:zinc ion binding"/>
    <property type="evidence" value="ECO:0007669"/>
    <property type="project" value="UniProtKB-UniRule"/>
</dbReference>
<dbReference type="CDD" id="cd01412">
    <property type="entry name" value="SIRT5_Af1_CobB"/>
    <property type="match status" value="1"/>
</dbReference>
<dbReference type="Gene3D" id="3.30.1600.10">
    <property type="entry name" value="SIR2/SIRT2 'Small Domain"/>
    <property type="match status" value="1"/>
</dbReference>
<dbReference type="Gene3D" id="3.40.50.1220">
    <property type="entry name" value="TPP-binding domain"/>
    <property type="match status" value="1"/>
</dbReference>
<dbReference type="HAMAP" id="MF_01121">
    <property type="entry name" value="Sirtuin_ClassIII"/>
    <property type="match status" value="1"/>
</dbReference>
<dbReference type="InterPro" id="IPR029035">
    <property type="entry name" value="DHS-like_NAD/FAD-binding_dom"/>
</dbReference>
<dbReference type="InterPro" id="IPR050134">
    <property type="entry name" value="NAD-dep_sirtuin_deacylases"/>
</dbReference>
<dbReference type="InterPro" id="IPR003000">
    <property type="entry name" value="Sirtuin"/>
</dbReference>
<dbReference type="InterPro" id="IPR026591">
    <property type="entry name" value="Sirtuin_cat_small_dom_sf"/>
</dbReference>
<dbReference type="InterPro" id="IPR027546">
    <property type="entry name" value="Sirtuin_class_III"/>
</dbReference>
<dbReference type="InterPro" id="IPR026590">
    <property type="entry name" value="Ssirtuin_cat_dom"/>
</dbReference>
<dbReference type="PANTHER" id="PTHR11085">
    <property type="entry name" value="NAD-DEPENDENT PROTEIN DEACYLASE SIRTUIN-5, MITOCHONDRIAL-RELATED"/>
    <property type="match status" value="1"/>
</dbReference>
<dbReference type="PANTHER" id="PTHR11085:SF10">
    <property type="entry name" value="NAD-DEPENDENT PROTEIN DEACYLASE SIRTUIN-5, MITOCHONDRIAL-RELATED"/>
    <property type="match status" value="1"/>
</dbReference>
<dbReference type="Pfam" id="PF02146">
    <property type="entry name" value="SIR2"/>
    <property type="match status" value="1"/>
</dbReference>
<dbReference type="SUPFAM" id="SSF52467">
    <property type="entry name" value="DHS-like NAD/FAD-binding domain"/>
    <property type="match status" value="1"/>
</dbReference>
<dbReference type="PROSITE" id="PS50305">
    <property type="entry name" value="SIRTUIN"/>
    <property type="match status" value="1"/>
</dbReference>
<evidence type="ECO:0000255" key="1">
    <source>
        <dbReference type="HAMAP-Rule" id="MF_03160"/>
    </source>
</evidence>
<evidence type="ECO:0000255" key="2">
    <source>
        <dbReference type="PROSITE-ProRule" id="PRU00236"/>
    </source>
</evidence>
<organism>
    <name type="scientific">Candida albicans (strain SC5314 / ATCC MYA-2876)</name>
    <name type="common">Yeast</name>
    <dbReference type="NCBI Taxonomy" id="237561"/>
    <lineage>
        <taxon>Eukaryota</taxon>
        <taxon>Fungi</taxon>
        <taxon>Dikarya</taxon>
        <taxon>Ascomycota</taxon>
        <taxon>Saccharomycotina</taxon>
        <taxon>Pichiomycetes</taxon>
        <taxon>Debaryomycetaceae</taxon>
        <taxon>Candida/Lodderomyces clade</taxon>
        <taxon>Candida</taxon>
    </lineage>
</organism>
<comment type="function">
    <text evidence="1">NAD-dependent lysine demalonylase, desuccinylase and deglutarylase that specifically removes malonyl, succinyl and glutaryl groups on target proteins. Has weak NAD-dependent protein deacetylase activity; however this activity may not be physiologically relevant in vivo.</text>
</comment>
<comment type="catalytic activity">
    <reaction evidence="1">
        <text>N(6)-malonyl-L-lysyl-[protein] + NAD(+) + H2O = 2''-O-malonyl-ADP-D-ribose + nicotinamide + L-lysyl-[protein]</text>
        <dbReference type="Rhea" id="RHEA:47672"/>
        <dbReference type="Rhea" id="RHEA-COMP:9752"/>
        <dbReference type="Rhea" id="RHEA-COMP:11878"/>
        <dbReference type="ChEBI" id="CHEBI:15377"/>
        <dbReference type="ChEBI" id="CHEBI:17154"/>
        <dbReference type="ChEBI" id="CHEBI:29969"/>
        <dbReference type="ChEBI" id="CHEBI:57540"/>
        <dbReference type="ChEBI" id="CHEBI:87831"/>
        <dbReference type="ChEBI" id="CHEBI:87833"/>
    </reaction>
</comment>
<comment type="catalytic activity">
    <reaction evidence="1">
        <text>N(6)-succinyl-L-lysyl-[protein] + NAD(+) + H2O = 2''-O-succinyl-ADP-D-ribose + nicotinamide + L-lysyl-[protein]</text>
        <dbReference type="Rhea" id="RHEA:47668"/>
        <dbReference type="Rhea" id="RHEA-COMP:9752"/>
        <dbReference type="Rhea" id="RHEA-COMP:11877"/>
        <dbReference type="ChEBI" id="CHEBI:15377"/>
        <dbReference type="ChEBI" id="CHEBI:17154"/>
        <dbReference type="ChEBI" id="CHEBI:29969"/>
        <dbReference type="ChEBI" id="CHEBI:57540"/>
        <dbReference type="ChEBI" id="CHEBI:87830"/>
        <dbReference type="ChEBI" id="CHEBI:87832"/>
    </reaction>
</comment>
<comment type="catalytic activity">
    <reaction evidence="1">
        <text>N(6)-glutaryl-L-lysyl-[protein] + NAD(+) + H2O = 2''-O-glutaryl-ADP-D-ribose + nicotinamide + L-lysyl-[protein]</text>
        <dbReference type="Rhea" id="RHEA:47664"/>
        <dbReference type="Rhea" id="RHEA-COMP:9752"/>
        <dbReference type="Rhea" id="RHEA-COMP:11875"/>
        <dbReference type="ChEBI" id="CHEBI:15377"/>
        <dbReference type="ChEBI" id="CHEBI:17154"/>
        <dbReference type="ChEBI" id="CHEBI:29969"/>
        <dbReference type="ChEBI" id="CHEBI:57540"/>
        <dbReference type="ChEBI" id="CHEBI:87828"/>
        <dbReference type="ChEBI" id="CHEBI:87829"/>
    </reaction>
</comment>
<comment type="cofactor">
    <cofactor evidence="1">
        <name>Zn(2+)</name>
        <dbReference type="ChEBI" id="CHEBI:29105"/>
    </cofactor>
    <text evidence="1">Binds 1 zinc ion per subunit.</text>
</comment>
<comment type="subcellular location">
    <subcellularLocation>
        <location evidence="1">Mitochondrion</location>
    </subcellularLocation>
</comment>
<comment type="domain">
    <text evidence="1">In contrast to class I sirtuins, class III sirtuins have only weak deacetylase activity. Difference in substrate specificity is probably due to a larger hydrophobic pocket with 2 residues (Tyr-67 and Arg-70) that bind to malonylated and succinylated substrates and define the specificity.</text>
</comment>
<comment type="miscellaneous">
    <text evidence="1">This protein may be expected to contain an N-terminal transit peptide but none has been predicted.</text>
</comment>
<comment type="similarity">
    <text evidence="1">Belongs to the sirtuin family. Class III subfamily.</text>
</comment>
<reference key="1">
    <citation type="journal article" date="2004" name="Proc. Natl. Acad. Sci. U.S.A.">
        <title>The diploid genome sequence of Candida albicans.</title>
        <authorList>
            <person name="Jones T."/>
            <person name="Federspiel N.A."/>
            <person name="Chibana H."/>
            <person name="Dungan J."/>
            <person name="Kalman S."/>
            <person name="Magee B.B."/>
            <person name="Newport G."/>
            <person name="Thorstenson Y.R."/>
            <person name="Agabian N."/>
            <person name="Magee P.T."/>
            <person name="Davis R.W."/>
            <person name="Scherer S."/>
        </authorList>
    </citation>
    <scope>NUCLEOTIDE SEQUENCE [LARGE SCALE GENOMIC DNA]</scope>
    <source>
        <strain>SC5314 / ATCC MYA-2876</strain>
    </source>
</reference>
<reference key="2">
    <citation type="journal article" date="2007" name="Genome Biol.">
        <title>Assembly of the Candida albicans genome into sixteen supercontigs aligned on the eight chromosomes.</title>
        <authorList>
            <person name="van het Hoog M."/>
            <person name="Rast T.J."/>
            <person name="Martchenko M."/>
            <person name="Grindle S."/>
            <person name="Dignard D."/>
            <person name="Hogues H."/>
            <person name="Cuomo C."/>
            <person name="Berriman M."/>
            <person name="Scherer S."/>
            <person name="Magee B.B."/>
            <person name="Whiteway M."/>
            <person name="Chibana H."/>
            <person name="Nantel A."/>
            <person name="Magee P.T."/>
        </authorList>
    </citation>
    <scope>GENOME REANNOTATION</scope>
    <source>
        <strain>SC5314 / ATCC MYA-2876</strain>
    </source>
</reference>
<reference key="3">
    <citation type="journal article" date="2013" name="Genome Biol.">
        <title>Assembly of a phased diploid Candida albicans genome facilitates allele-specific measurements and provides a simple model for repeat and indel structure.</title>
        <authorList>
            <person name="Muzzey D."/>
            <person name="Schwartz K."/>
            <person name="Weissman J.S."/>
            <person name="Sherlock G."/>
        </authorList>
    </citation>
    <scope>NUCLEOTIDE SEQUENCE [LARGE SCALE GENOMIC DNA]</scope>
    <scope>GENOME REANNOTATION</scope>
    <source>
        <strain>SC5314 / ATCC MYA-2876</strain>
    </source>
</reference>
<accession>Q5AI90</accession>
<accession>A0A1D8PCV1</accession>
<keyword id="KW-0479">Metal-binding</keyword>
<keyword id="KW-0496">Mitochondrion</keyword>
<keyword id="KW-0520">NAD</keyword>
<keyword id="KW-1185">Reference proteome</keyword>
<keyword id="KW-0808">Transferase</keyword>
<keyword id="KW-0862">Zinc</keyword>
<proteinExistence type="inferred from homology"/>